<accession>Q9QXN1</accession>
<name>LEF1_RAT</name>
<reference key="1">
    <citation type="journal article" date="1999" name="Acta Biochim. Pol.">
        <title>Cloning of the lymphoid enhancer binding factor-1 (Lef-1) cDNA from rat kidney: homology to the mouse sequence.</title>
        <authorList>
            <person name="Kobielak K."/>
            <person name="Kobielak A."/>
            <person name="Trzeciak W.H."/>
        </authorList>
    </citation>
    <scope>NUCLEOTIDE SEQUENCE [MRNA]</scope>
    <source>
        <tissue>Kidney</tissue>
    </source>
</reference>
<protein>
    <recommendedName>
        <fullName evidence="8">Lymphoid enhancer-binding factor 1</fullName>
        <shortName evidence="6">LEF-1</shortName>
    </recommendedName>
</protein>
<keyword id="KW-0010">Activator</keyword>
<keyword id="KW-0238">DNA-binding</keyword>
<keyword id="KW-1017">Isopeptide bond</keyword>
<keyword id="KW-0539">Nucleus</keyword>
<keyword id="KW-0597">Phosphoprotein</keyword>
<keyword id="KW-1185">Reference proteome</keyword>
<keyword id="KW-0804">Transcription</keyword>
<keyword id="KW-0805">Transcription regulation</keyword>
<keyword id="KW-0832">Ubl conjugation</keyword>
<keyword id="KW-0879">Wnt signaling pathway</keyword>
<evidence type="ECO:0000250" key="1"/>
<evidence type="ECO:0000250" key="2">
    <source>
        <dbReference type="UniProtKB" id="P27782"/>
    </source>
</evidence>
<evidence type="ECO:0000250" key="3">
    <source>
        <dbReference type="UniProtKB" id="Q9UJU2"/>
    </source>
</evidence>
<evidence type="ECO:0000255" key="4">
    <source>
        <dbReference type="PROSITE-ProRule" id="PRU00267"/>
    </source>
</evidence>
<evidence type="ECO:0000256" key="5">
    <source>
        <dbReference type="SAM" id="MobiDB-lite"/>
    </source>
</evidence>
<evidence type="ECO:0000303" key="6">
    <source>
    </source>
</evidence>
<evidence type="ECO:0000305" key="7"/>
<evidence type="ECO:0000312" key="8">
    <source>
        <dbReference type="RGD" id="620241"/>
    </source>
</evidence>
<dbReference type="EMBL" id="AF198533">
    <property type="protein sequence ID" value="AAF15601.1"/>
    <property type="molecule type" value="mRNA"/>
</dbReference>
<dbReference type="RefSeq" id="NP_569113.1">
    <property type="nucleotide sequence ID" value="NM_130429.1"/>
</dbReference>
<dbReference type="BMRB" id="Q9QXN1"/>
<dbReference type="SMR" id="Q9QXN1"/>
<dbReference type="BioGRID" id="250906">
    <property type="interactions" value="1"/>
</dbReference>
<dbReference type="FunCoup" id="Q9QXN1">
    <property type="interactions" value="803"/>
</dbReference>
<dbReference type="IntAct" id="Q9QXN1">
    <property type="interactions" value="1"/>
</dbReference>
<dbReference type="MINT" id="Q9QXN1"/>
<dbReference type="STRING" id="10116.ENSRNOP00000013694"/>
<dbReference type="GlyGen" id="Q9QXN1">
    <property type="glycosylation" value="1 site"/>
</dbReference>
<dbReference type="iPTMnet" id="Q9QXN1"/>
<dbReference type="PhosphoSitePlus" id="Q9QXN1"/>
<dbReference type="PaxDb" id="10116-ENSRNOP00000013694"/>
<dbReference type="GeneID" id="161452"/>
<dbReference type="KEGG" id="rno:161452"/>
<dbReference type="AGR" id="RGD:620241"/>
<dbReference type="CTD" id="51176"/>
<dbReference type="RGD" id="620241">
    <property type="gene designation" value="Lef1"/>
</dbReference>
<dbReference type="eggNOG" id="KOG3248">
    <property type="taxonomic scope" value="Eukaryota"/>
</dbReference>
<dbReference type="InParanoid" id="Q9QXN1"/>
<dbReference type="OrthoDB" id="2307332at2759"/>
<dbReference type="PhylomeDB" id="Q9QXN1"/>
<dbReference type="Reactome" id="R-RNO-201722">
    <property type="pathway name" value="Formation of the beta-catenin:TCF transactivating complex"/>
</dbReference>
<dbReference type="Reactome" id="R-RNO-3769402">
    <property type="pathway name" value="Deactivation of the beta-catenin transactivating complex"/>
</dbReference>
<dbReference type="Reactome" id="R-RNO-4086398">
    <property type="pathway name" value="Ca2+ pathway"/>
</dbReference>
<dbReference type="Reactome" id="R-RNO-4641265">
    <property type="pathway name" value="Repression of WNT target genes"/>
</dbReference>
<dbReference type="Reactome" id="R-RNO-8951430">
    <property type="pathway name" value="RUNX3 regulates WNT signaling"/>
</dbReference>
<dbReference type="Reactome" id="R-RNO-9825892">
    <property type="pathway name" value="Regulation of MITF-M-dependent genes involved in cell cycle and proliferation"/>
</dbReference>
<dbReference type="PRO" id="PR:Q9QXN1"/>
<dbReference type="Proteomes" id="UP000002494">
    <property type="component" value="Unplaced"/>
</dbReference>
<dbReference type="GO" id="GO:1990907">
    <property type="term" value="C:beta-catenin-TCF complex"/>
    <property type="evidence" value="ECO:0000266"/>
    <property type="project" value="RGD"/>
</dbReference>
<dbReference type="GO" id="GO:0000785">
    <property type="term" value="C:chromatin"/>
    <property type="evidence" value="ECO:0000318"/>
    <property type="project" value="GO_Central"/>
</dbReference>
<dbReference type="GO" id="GO:0005737">
    <property type="term" value="C:cytoplasm"/>
    <property type="evidence" value="ECO:0000266"/>
    <property type="project" value="RGD"/>
</dbReference>
<dbReference type="GO" id="GO:0005654">
    <property type="term" value="C:nucleoplasm"/>
    <property type="evidence" value="ECO:0000304"/>
    <property type="project" value="Reactome"/>
</dbReference>
<dbReference type="GO" id="GO:0005634">
    <property type="term" value="C:nucleus"/>
    <property type="evidence" value="ECO:0000266"/>
    <property type="project" value="RGD"/>
</dbReference>
<dbReference type="GO" id="GO:0032993">
    <property type="term" value="C:protein-DNA complex"/>
    <property type="evidence" value="ECO:0000266"/>
    <property type="project" value="RGD"/>
</dbReference>
<dbReference type="GO" id="GO:0090575">
    <property type="term" value="C:RNA polymerase II transcription regulator complex"/>
    <property type="evidence" value="ECO:0000266"/>
    <property type="project" value="RGD"/>
</dbReference>
<dbReference type="GO" id="GO:0005667">
    <property type="term" value="C:transcription regulator complex"/>
    <property type="evidence" value="ECO:0000266"/>
    <property type="project" value="RGD"/>
</dbReference>
<dbReference type="GO" id="GO:0070016">
    <property type="term" value="F:armadillo repeat domain binding"/>
    <property type="evidence" value="ECO:0000266"/>
    <property type="project" value="RGD"/>
</dbReference>
<dbReference type="GO" id="GO:0008013">
    <property type="term" value="F:beta-catenin binding"/>
    <property type="evidence" value="ECO:0000266"/>
    <property type="project" value="RGD"/>
</dbReference>
<dbReference type="GO" id="GO:0070742">
    <property type="term" value="F:C2H2 zinc finger domain binding"/>
    <property type="evidence" value="ECO:0000266"/>
    <property type="project" value="RGD"/>
</dbReference>
<dbReference type="GO" id="GO:0003682">
    <property type="term" value="F:chromatin binding"/>
    <property type="evidence" value="ECO:0000266"/>
    <property type="project" value="RGD"/>
</dbReference>
<dbReference type="GO" id="GO:0000987">
    <property type="term" value="F:cis-regulatory region sequence-specific DNA binding"/>
    <property type="evidence" value="ECO:0000266"/>
    <property type="project" value="RGD"/>
</dbReference>
<dbReference type="GO" id="GO:0003677">
    <property type="term" value="F:DNA binding"/>
    <property type="evidence" value="ECO:0000250"/>
    <property type="project" value="UniProtKB"/>
</dbReference>
<dbReference type="GO" id="GO:0008301">
    <property type="term" value="F:DNA binding, bending"/>
    <property type="evidence" value="ECO:0000250"/>
    <property type="project" value="UniProtKB"/>
</dbReference>
<dbReference type="GO" id="GO:0001228">
    <property type="term" value="F:DNA-binding transcription activator activity, RNA polymerase II-specific"/>
    <property type="evidence" value="ECO:0000266"/>
    <property type="project" value="RGD"/>
</dbReference>
<dbReference type="GO" id="GO:0003700">
    <property type="term" value="F:DNA-binding transcription factor activity"/>
    <property type="evidence" value="ECO:0000266"/>
    <property type="project" value="RGD"/>
</dbReference>
<dbReference type="GO" id="GO:0000981">
    <property type="term" value="F:DNA-binding transcription factor activity, RNA polymerase II-specific"/>
    <property type="evidence" value="ECO:0000266"/>
    <property type="project" value="RGD"/>
</dbReference>
<dbReference type="GO" id="GO:0001227">
    <property type="term" value="F:DNA-binding transcription repressor activity, RNA polymerase II-specific"/>
    <property type="evidence" value="ECO:0000266"/>
    <property type="project" value="RGD"/>
</dbReference>
<dbReference type="GO" id="GO:0045295">
    <property type="term" value="F:gamma-catenin binding"/>
    <property type="evidence" value="ECO:0000266"/>
    <property type="project" value="RGD"/>
</dbReference>
<dbReference type="GO" id="GO:0042826">
    <property type="term" value="F:histone deacetylase binding"/>
    <property type="evidence" value="ECO:0000266"/>
    <property type="project" value="RGD"/>
</dbReference>
<dbReference type="GO" id="GO:0030331">
    <property type="term" value="F:nuclear estrogen receptor binding"/>
    <property type="evidence" value="ECO:0000266"/>
    <property type="project" value="RGD"/>
</dbReference>
<dbReference type="GO" id="GO:0003676">
    <property type="term" value="F:nucleic acid binding"/>
    <property type="evidence" value="ECO:0000266"/>
    <property type="project" value="RGD"/>
</dbReference>
<dbReference type="GO" id="GO:0000978">
    <property type="term" value="F:RNA polymerase II cis-regulatory region sequence-specific DNA binding"/>
    <property type="evidence" value="ECO:0000266"/>
    <property type="project" value="RGD"/>
</dbReference>
<dbReference type="GO" id="GO:0000977">
    <property type="term" value="F:RNA polymerase II transcription regulatory region sequence-specific DNA binding"/>
    <property type="evidence" value="ECO:0000266"/>
    <property type="project" value="RGD"/>
</dbReference>
<dbReference type="GO" id="GO:0043565">
    <property type="term" value="F:sequence-specific DNA binding"/>
    <property type="evidence" value="ECO:0000266"/>
    <property type="project" value="RGD"/>
</dbReference>
<dbReference type="GO" id="GO:1990837">
    <property type="term" value="F:sequence-specific double-stranded DNA binding"/>
    <property type="evidence" value="ECO:0000266"/>
    <property type="project" value="RGD"/>
</dbReference>
<dbReference type="GO" id="GO:0000976">
    <property type="term" value="F:transcription cis-regulatory region binding"/>
    <property type="evidence" value="ECO:0000266"/>
    <property type="project" value="RGD"/>
</dbReference>
<dbReference type="GO" id="GO:0001222">
    <property type="term" value="F:transcription corepressor binding"/>
    <property type="evidence" value="ECO:0000266"/>
    <property type="project" value="RGD"/>
</dbReference>
<dbReference type="GO" id="GO:0140416">
    <property type="term" value="F:transcription regulator inhibitor activity"/>
    <property type="evidence" value="ECO:0000266"/>
    <property type="project" value="RGD"/>
</dbReference>
<dbReference type="GO" id="GO:0046632">
    <property type="term" value="P:alpha-beta T cell differentiation"/>
    <property type="evidence" value="ECO:0000266"/>
    <property type="project" value="RGD"/>
</dbReference>
<dbReference type="GO" id="GO:0060033">
    <property type="term" value="P:anatomical structure regression"/>
    <property type="evidence" value="ECO:0000266"/>
    <property type="project" value="RGD"/>
</dbReference>
<dbReference type="GO" id="GO:0031100">
    <property type="term" value="P:animal organ regeneration"/>
    <property type="evidence" value="ECO:0000270"/>
    <property type="project" value="RGD"/>
</dbReference>
<dbReference type="GO" id="GO:1902262">
    <property type="term" value="P:apoptotic process involved in blood vessel morphogenesis"/>
    <property type="evidence" value="ECO:0000266"/>
    <property type="project" value="RGD"/>
</dbReference>
<dbReference type="GO" id="GO:0060561">
    <property type="term" value="P:apoptotic process involved in morphogenesis"/>
    <property type="evidence" value="ECO:0000266"/>
    <property type="project" value="RGD"/>
</dbReference>
<dbReference type="GO" id="GO:0042100">
    <property type="term" value="P:B cell proliferation"/>
    <property type="evidence" value="ECO:0000266"/>
    <property type="project" value="RGD"/>
</dbReference>
<dbReference type="GO" id="GO:0030509">
    <property type="term" value="P:BMP signaling pathway"/>
    <property type="evidence" value="ECO:0000266"/>
    <property type="project" value="RGD"/>
</dbReference>
<dbReference type="GO" id="GO:0001569">
    <property type="term" value="P:branching involved in blood vessel morphogenesis"/>
    <property type="evidence" value="ECO:0000266"/>
    <property type="project" value="RGD"/>
</dbReference>
<dbReference type="GO" id="GO:0060070">
    <property type="term" value="P:canonical Wnt signaling pathway"/>
    <property type="evidence" value="ECO:0000266"/>
    <property type="project" value="RGD"/>
</dbReference>
<dbReference type="GO" id="GO:0007155">
    <property type="term" value="P:cell adhesion"/>
    <property type="evidence" value="ECO:0000270"/>
    <property type="project" value="RGD"/>
</dbReference>
<dbReference type="GO" id="GO:0060326">
    <property type="term" value="P:cell chemotaxis"/>
    <property type="evidence" value="ECO:0000266"/>
    <property type="project" value="RGD"/>
</dbReference>
<dbReference type="GO" id="GO:0048468">
    <property type="term" value="P:cell development"/>
    <property type="evidence" value="ECO:0000266"/>
    <property type="project" value="RGD"/>
</dbReference>
<dbReference type="GO" id="GO:0071345">
    <property type="term" value="P:cellular response to cytokine stimulus"/>
    <property type="evidence" value="ECO:0000266"/>
    <property type="project" value="RGD"/>
</dbReference>
<dbReference type="GO" id="GO:0071353">
    <property type="term" value="P:cellular response to interleukin-4"/>
    <property type="evidence" value="ECO:0000266"/>
    <property type="project" value="RGD"/>
</dbReference>
<dbReference type="GO" id="GO:0060710">
    <property type="term" value="P:chorio-allantoic fusion"/>
    <property type="evidence" value="ECO:0000266"/>
    <property type="project" value="RGD"/>
</dbReference>
<dbReference type="GO" id="GO:0021542">
    <property type="term" value="P:dentate gyrus development"/>
    <property type="evidence" value="ECO:0000266"/>
    <property type="project" value="RGD"/>
</dbReference>
<dbReference type="GO" id="GO:0030326">
    <property type="term" value="P:embryonic limb morphogenesis"/>
    <property type="evidence" value="ECO:0000266"/>
    <property type="project" value="RGD"/>
</dbReference>
<dbReference type="GO" id="GO:1904019">
    <property type="term" value="P:epithelial cell apoptotic process"/>
    <property type="evidence" value="ECO:0000266"/>
    <property type="project" value="RGD"/>
</dbReference>
<dbReference type="GO" id="GO:0001837">
    <property type="term" value="P:epithelial to mesenchymal transition"/>
    <property type="evidence" value="ECO:0000266"/>
    <property type="project" value="RGD"/>
</dbReference>
<dbReference type="GO" id="GO:0060325">
    <property type="term" value="P:face morphogenesis"/>
    <property type="evidence" value="ECO:0000266"/>
    <property type="project" value="RGD"/>
</dbReference>
<dbReference type="GO" id="GO:0021873">
    <property type="term" value="P:forebrain neuroblast division"/>
    <property type="evidence" value="ECO:0000266"/>
    <property type="project" value="RGD"/>
</dbReference>
<dbReference type="GO" id="GO:0021861">
    <property type="term" value="P:forebrain radial glial cell differentiation"/>
    <property type="evidence" value="ECO:0000266"/>
    <property type="project" value="RGD"/>
</dbReference>
<dbReference type="GO" id="GO:0021943">
    <property type="term" value="P:formation of radial glial scaffolds"/>
    <property type="evidence" value="ECO:0000266"/>
    <property type="project" value="RGD"/>
</dbReference>
<dbReference type="GO" id="GO:0021766">
    <property type="term" value="P:hippocampus development"/>
    <property type="evidence" value="ECO:0000266"/>
    <property type="project" value="RGD"/>
</dbReference>
<dbReference type="GO" id="GO:0001822">
    <property type="term" value="P:kidney development"/>
    <property type="evidence" value="ECO:0000270"/>
    <property type="project" value="RGD"/>
</dbReference>
<dbReference type="GO" id="GO:0030879">
    <property type="term" value="P:mammary gland development"/>
    <property type="evidence" value="ECO:0000266"/>
    <property type="project" value="RGD"/>
</dbReference>
<dbReference type="GO" id="GO:0043066">
    <property type="term" value="P:negative regulation of apoptotic process"/>
    <property type="evidence" value="ECO:0000266"/>
    <property type="project" value="RGD"/>
</dbReference>
<dbReference type="GO" id="GO:0071866">
    <property type="term" value="P:negative regulation of apoptotic process in bone marrow cell"/>
    <property type="evidence" value="ECO:0000266"/>
    <property type="project" value="RGD"/>
</dbReference>
<dbReference type="GO" id="GO:0045892">
    <property type="term" value="P:negative regulation of DNA-templated transcription"/>
    <property type="evidence" value="ECO:0000266"/>
    <property type="project" value="RGD"/>
</dbReference>
<dbReference type="GO" id="GO:0032696">
    <property type="term" value="P:negative regulation of interleukin-13 production"/>
    <property type="evidence" value="ECO:0000266"/>
    <property type="project" value="RGD"/>
</dbReference>
<dbReference type="GO" id="GO:0032713">
    <property type="term" value="P:negative regulation of interleukin-4 production"/>
    <property type="evidence" value="ECO:0000266"/>
    <property type="project" value="RGD"/>
</dbReference>
<dbReference type="GO" id="GO:0032714">
    <property type="term" value="P:negative regulation of interleukin-5 production"/>
    <property type="evidence" value="ECO:0000266"/>
    <property type="project" value="RGD"/>
</dbReference>
<dbReference type="GO" id="GO:0045843">
    <property type="term" value="P:negative regulation of striated muscle tissue development"/>
    <property type="evidence" value="ECO:0000266"/>
    <property type="project" value="RGD"/>
</dbReference>
<dbReference type="GO" id="GO:0000122">
    <property type="term" value="P:negative regulation of transcription by RNA polymerase II"/>
    <property type="evidence" value="ECO:0000266"/>
    <property type="project" value="RGD"/>
</dbReference>
<dbReference type="GO" id="GO:0030223">
    <property type="term" value="P:neutrophil differentiation"/>
    <property type="evidence" value="ECO:0000266"/>
    <property type="project" value="RGD"/>
</dbReference>
<dbReference type="GO" id="GO:0071895">
    <property type="term" value="P:odontoblast differentiation"/>
    <property type="evidence" value="ECO:0000315"/>
    <property type="project" value="RGD"/>
</dbReference>
<dbReference type="GO" id="GO:0042475">
    <property type="term" value="P:odontogenesis of dentin-containing tooth"/>
    <property type="evidence" value="ECO:0000266"/>
    <property type="project" value="RGD"/>
</dbReference>
<dbReference type="GO" id="GO:0001649">
    <property type="term" value="P:osteoblast differentiation"/>
    <property type="evidence" value="ECO:0000266"/>
    <property type="project" value="RGD"/>
</dbReference>
<dbReference type="GO" id="GO:0048341">
    <property type="term" value="P:paraxial mesoderm formation"/>
    <property type="evidence" value="ECO:0000266"/>
    <property type="project" value="RGD"/>
</dbReference>
<dbReference type="GO" id="GO:0030335">
    <property type="term" value="P:positive regulation of cell migration"/>
    <property type="evidence" value="ECO:0000266"/>
    <property type="project" value="RGD"/>
</dbReference>
<dbReference type="GO" id="GO:0071864">
    <property type="term" value="P:positive regulation of cell proliferation in bone marrow"/>
    <property type="evidence" value="ECO:0000266"/>
    <property type="project" value="RGD"/>
</dbReference>
<dbReference type="GO" id="GO:1902732">
    <property type="term" value="P:positive regulation of chondrocyte proliferation"/>
    <property type="evidence" value="ECO:0000266"/>
    <property type="project" value="RGD"/>
</dbReference>
<dbReference type="GO" id="GO:0045893">
    <property type="term" value="P:positive regulation of DNA-templated transcription"/>
    <property type="evidence" value="ECO:0000266"/>
    <property type="project" value="RGD"/>
</dbReference>
<dbReference type="GO" id="GO:0010718">
    <property type="term" value="P:positive regulation of epithelial to mesenchymal transition"/>
    <property type="evidence" value="ECO:0000266"/>
    <property type="project" value="RGD"/>
</dbReference>
<dbReference type="GO" id="GO:0045588">
    <property type="term" value="P:positive regulation of gamma-delta T cell differentiation"/>
    <property type="evidence" value="ECO:0000250"/>
    <property type="project" value="UniProtKB"/>
</dbReference>
<dbReference type="GO" id="GO:0010628">
    <property type="term" value="P:positive regulation of gene expression"/>
    <property type="evidence" value="ECO:0000266"/>
    <property type="project" value="RGD"/>
</dbReference>
<dbReference type="GO" id="GO:0030854">
    <property type="term" value="P:positive regulation of granulocyte differentiation"/>
    <property type="evidence" value="ECO:0000266"/>
    <property type="project" value="RGD"/>
</dbReference>
<dbReference type="GO" id="GO:1901331">
    <property type="term" value="P:positive regulation of odontoblast differentiation"/>
    <property type="evidence" value="ECO:0000250"/>
    <property type="project" value="UniProtKB"/>
</dbReference>
<dbReference type="GO" id="GO:0045944">
    <property type="term" value="P:positive regulation of transcription by RNA polymerase II"/>
    <property type="evidence" value="ECO:0000266"/>
    <property type="project" value="RGD"/>
</dbReference>
<dbReference type="GO" id="GO:0030177">
    <property type="term" value="P:positive regulation of Wnt signaling pathway"/>
    <property type="evidence" value="ECO:0000266"/>
    <property type="project" value="RGD"/>
</dbReference>
<dbReference type="GO" id="GO:0071168">
    <property type="term" value="P:protein localization to chromatin"/>
    <property type="evidence" value="ECO:0000266"/>
    <property type="project" value="RGD"/>
</dbReference>
<dbReference type="GO" id="GO:0022407">
    <property type="term" value="P:regulation of cell-cell adhesion"/>
    <property type="evidence" value="ECO:0000266"/>
    <property type="project" value="RGD"/>
</dbReference>
<dbReference type="GO" id="GO:0006355">
    <property type="term" value="P:regulation of DNA-templated transcription"/>
    <property type="evidence" value="ECO:0000250"/>
    <property type="project" value="UniProtKB"/>
</dbReference>
<dbReference type="GO" id="GO:0006357">
    <property type="term" value="P:regulation of transcription by RNA polymerase II"/>
    <property type="evidence" value="ECO:0000266"/>
    <property type="project" value="RGD"/>
</dbReference>
<dbReference type="GO" id="GO:0030111">
    <property type="term" value="P:regulation of Wnt signaling pathway"/>
    <property type="evidence" value="ECO:0000266"/>
    <property type="project" value="RGD"/>
</dbReference>
<dbReference type="GO" id="GO:0062009">
    <property type="term" value="P:secondary palate development"/>
    <property type="evidence" value="ECO:0000266"/>
    <property type="project" value="RGD"/>
</dbReference>
<dbReference type="GO" id="GO:0050909">
    <property type="term" value="P:sensory perception of taste"/>
    <property type="evidence" value="ECO:0000266"/>
    <property type="project" value="RGD"/>
</dbReference>
<dbReference type="GO" id="GO:0043588">
    <property type="term" value="P:skin development"/>
    <property type="evidence" value="ECO:0000270"/>
    <property type="project" value="RGD"/>
</dbReference>
<dbReference type="GO" id="GO:0001756">
    <property type="term" value="P:somitogenesis"/>
    <property type="evidence" value="ECO:0000266"/>
    <property type="project" value="RGD"/>
</dbReference>
<dbReference type="GO" id="GO:0002040">
    <property type="term" value="P:sprouting angiogenesis"/>
    <property type="evidence" value="ECO:0000266"/>
    <property type="project" value="RGD"/>
</dbReference>
<dbReference type="GO" id="GO:0033153">
    <property type="term" value="P:T cell receptor V(D)J recombination"/>
    <property type="evidence" value="ECO:0000266"/>
    <property type="project" value="RGD"/>
</dbReference>
<dbReference type="GO" id="GO:0045063">
    <property type="term" value="P:T-helper 1 cell differentiation"/>
    <property type="evidence" value="ECO:0000266"/>
    <property type="project" value="RGD"/>
</dbReference>
<dbReference type="GO" id="GO:0043586">
    <property type="term" value="P:tongue development"/>
    <property type="evidence" value="ECO:0000266"/>
    <property type="project" value="RGD"/>
</dbReference>
<dbReference type="GO" id="GO:0061153">
    <property type="term" value="P:trachea gland development"/>
    <property type="evidence" value="ECO:0000266"/>
    <property type="project" value="RGD"/>
</dbReference>
<dbReference type="GO" id="GO:0006366">
    <property type="term" value="P:transcription by RNA polymerase II"/>
    <property type="evidence" value="ECO:0000266"/>
    <property type="project" value="RGD"/>
</dbReference>
<dbReference type="GO" id="GO:0001944">
    <property type="term" value="P:vasculature development"/>
    <property type="evidence" value="ECO:0000266"/>
    <property type="project" value="RGD"/>
</dbReference>
<dbReference type="CDD" id="cd21996">
    <property type="entry name" value="HMG-box_TCF7-like"/>
    <property type="match status" value="1"/>
</dbReference>
<dbReference type="FunFam" id="4.10.900.10:FF:000004">
    <property type="entry name" value="lymphoid enhancer-binding factor 1 isoform X2"/>
    <property type="match status" value="1"/>
</dbReference>
<dbReference type="FunFam" id="1.10.30.10:FF:000001">
    <property type="entry name" value="transcription factor 7 isoform X2"/>
    <property type="match status" value="1"/>
</dbReference>
<dbReference type="Gene3D" id="1.10.30.10">
    <property type="entry name" value="High mobility group box domain"/>
    <property type="match status" value="1"/>
</dbReference>
<dbReference type="Gene3D" id="4.10.900.10">
    <property type="entry name" value="TCF3-CBD (Catenin binding domain)"/>
    <property type="match status" value="1"/>
</dbReference>
<dbReference type="InterPro" id="IPR027397">
    <property type="entry name" value="Catenin-bd_sf"/>
</dbReference>
<dbReference type="InterPro" id="IPR013558">
    <property type="entry name" value="CTNNB1-bd_N"/>
</dbReference>
<dbReference type="InterPro" id="IPR009071">
    <property type="entry name" value="HMG_box_dom"/>
</dbReference>
<dbReference type="InterPro" id="IPR036910">
    <property type="entry name" value="HMG_box_dom_sf"/>
</dbReference>
<dbReference type="InterPro" id="IPR024940">
    <property type="entry name" value="TCF/LEF"/>
</dbReference>
<dbReference type="PANTHER" id="PTHR10373:SF11">
    <property type="entry name" value="LYMPHOID ENHANCER-BINDING FACTOR 1"/>
    <property type="match status" value="1"/>
</dbReference>
<dbReference type="PANTHER" id="PTHR10373">
    <property type="entry name" value="TRANSCRIPTION FACTOR 7 FAMILY MEMBER"/>
    <property type="match status" value="1"/>
</dbReference>
<dbReference type="Pfam" id="PF08347">
    <property type="entry name" value="CTNNB1_binding"/>
    <property type="match status" value="1"/>
</dbReference>
<dbReference type="Pfam" id="PF00505">
    <property type="entry name" value="HMG_box"/>
    <property type="match status" value="1"/>
</dbReference>
<dbReference type="SMART" id="SM00398">
    <property type="entry name" value="HMG"/>
    <property type="match status" value="1"/>
</dbReference>
<dbReference type="SUPFAM" id="SSF47095">
    <property type="entry name" value="HMG-box"/>
    <property type="match status" value="1"/>
</dbReference>
<dbReference type="PROSITE" id="PS50118">
    <property type="entry name" value="HMG_BOX_2"/>
    <property type="match status" value="1"/>
</dbReference>
<sequence length="397" mass="44023">MPQLSGGGGGGDPELCATDEMIPFKDEGDPQKEKIFAEISHPEEEGDLADIKSSLVNESEIIPASNGHEVVGQTQSSQEPYHDKAREHPDDGKHPDGGLYNKGPSYSSYSGYIMMPNMNSDPYMSNGSLSPPIPRTSNKVPVVQPSHAVHPLTPLITYSDEHFSPGSHPSHIPSEVNPKQGMSRHPPAPEMPTFYPLSPGGVGQITPPLGWQGQPVYPITGGFRQAYPSSLSGDTSMSRFSHHMIPGPPGPHTTGIPHPAIVTPQVKQEHPHTDSDLMHVKPEHEQRKEQEPKRPHIKKPLNAFMLYMKEMRANVVAECTLKESAAINQILGRRWHALSREEQAKYYELARKERQLHMQLYPGWSARDNYGKKKKRKREKLQESTSGTGPRMTAAYI</sequence>
<comment type="function">
    <text evidence="2 3">Transcription factor that binds DNA in a sequence-specific manner (By similarity). Participates in the Wnt signaling pathway (By similarity). Activates transcription of target genes in the presence of CTNNB1 and EP300 (By similarity). PIASG antagonizes both Wnt-dependent and Wnt-independent activation by LEF1 (By similarity). TLE1, TLE2, TLE3 and TLE4 repress transactivation mediated by LEF1 and CTNNB1 (By similarity). Regulates T-cell receptor alpha enhancer function (By similarity). Required for IL17A expressing gamma-delta T-cell maturation and development, via binding to regulator loci of BLK to modulate expression (By similarity). Acts as a positive regulator of odontoblast differentiation during mesenchymal tooth germ formation, expression is repressed during the bell stage by MSX1-mediated inhibition of CTNNB1 signaling (By similarity). May play a role in hair cell differentiation and follicle morphogenesis (By similarity).</text>
</comment>
<comment type="subunit">
    <text evidence="2 3">Binds the armadillo repeat of CTNNB1 and forms a stable complex. Interacts with TLE1, PIASG, ALYREF/THOC4, EP300, MDFI and MDFIC (By similarity). Interacts with DAZAP2 (By similarity).</text>
</comment>
<comment type="subcellular location">
    <subcellularLocation>
        <location evidence="4">Nucleus</location>
    </subcellularLocation>
    <text evidence="1">Found in nuclear bodies upon PIASG binding.</text>
</comment>
<comment type="domain">
    <text>Proline-rich and acidic regions are implicated in the activation functions of RNA polymerase II transcription factors.</text>
</comment>
<comment type="PTM">
    <text evidence="3">Phosphorylated at Thr-153 and/or Ser-164 by NLK (By similarity). Phosphorylation by NLK at these sites represses LEF1-mediated transcriptional activation of target genes of the canonical Wnt signaling pathway (By similarity).</text>
</comment>
<comment type="similarity">
    <text evidence="7">Belongs to the TCF/LEF family.</text>
</comment>
<organism>
    <name type="scientific">Rattus norvegicus</name>
    <name type="common">Rat</name>
    <dbReference type="NCBI Taxonomy" id="10116"/>
    <lineage>
        <taxon>Eukaryota</taxon>
        <taxon>Metazoa</taxon>
        <taxon>Chordata</taxon>
        <taxon>Craniata</taxon>
        <taxon>Vertebrata</taxon>
        <taxon>Euteleostomi</taxon>
        <taxon>Mammalia</taxon>
        <taxon>Eutheria</taxon>
        <taxon>Euarchontoglires</taxon>
        <taxon>Glires</taxon>
        <taxon>Rodentia</taxon>
        <taxon>Myomorpha</taxon>
        <taxon>Muroidea</taxon>
        <taxon>Muridae</taxon>
        <taxon>Murinae</taxon>
        <taxon>Rattus</taxon>
    </lineage>
</organism>
<feature type="chain" id="PRO_0000048597" description="Lymphoid enhancer-binding factor 1">
    <location>
        <begin position="1"/>
        <end position="397"/>
    </location>
</feature>
<feature type="DNA-binding region" description="HMG box" evidence="4">
    <location>
        <begin position="297"/>
        <end position="365"/>
    </location>
</feature>
<feature type="region of interest" description="CTNNB1-binding" evidence="1">
    <location>
        <begin position="1"/>
        <end position="60"/>
    </location>
</feature>
<feature type="region of interest" description="Disordered" evidence="5">
    <location>
        <begin position="38"/>
        <end position="102"/>
    </location>
</feature>
<feature type="region of interest" description="Disordered" evidence="5">
    <location>
        <begin position="164"/>
        <end position="190"/>
    </location>
</feature>
<feature type="region of interest" description="Disordered" evidence="5">
    <location>
        <begin position="266"/>
        <end position="296"/>
    </location>
</feature>
<feature type="region of interest" description="Disordered" evidence="5">
    <location>
        <begin position="367"/>
        <end position="397"/>
    </location>
</feature>
<feature type="compositionally biased region" description="Basic and acidic residues" evidence="5">
    <location>
        <begin position="80"/>
        <end position="96"/>
    </location>
</feature>
<feature type="compositionally biased region" description="Basic and acidic residues" evidence="5">
    <location>
        <begin position="267"/>
        <end position="294"/>
    </location>
</feature>
<feature type="modified residue" description="Phosphoserine" evidence="3">
    <location>
        <position position="130"/>
    </location>
</feature>
<feature type="modified residue" description="Phosphothreonine; by NLK" evidence="3">
    <location>
        <position position="153"/>
    </location>
</feature>
<feature type="modified residue" description="Phosphoserine; by NLK" evidence="3">
    <location>
        <position position="164"/>
    </location>
</feature>
<feature type="cross-link" description="Glycyl lysine isopeptide (Lys-Gly) (interchain with G-Cter in SUMO)" evidence="1">
    <location>
        <position position="25"/>
    </location>
</feature>
<feature type="cross-link" description="Glycyl lysine isopeptide (Lys-Gly) (interchain with G-Cter in SUMO)" evidence="1">
    <location>
        <position position="267"/>
    </location>
</feature>
<gene>
    <name evidence="8" type="primary">Lef1</name>
</gene>
<proteinExistence type="evidence at transcript level"/>